<dbReference type="EMBL" id="Z11906">
    <property type="protein sequence ID" value="CAA77960.1"/>
    <property type="molecule type" value="Genomic_DNA"/>
</dbReference>
<dbReference type="PIR" id="S30939">
    <property type="entry name" value="S30939"/>
</dbReference>
<dbReference type="SMR" id="P28558"/>
<dbReference type="GO" id="GO:0009535">
    <property type="term" value="C:chloroplast thylakoid membrane"/>
    <property type="evidence" value="ECO:0007669"/>
    <property type="project" value="UniProtKB-SubCell"/>
</dbReference>
<dbReference type="GO" id="GO:0030089">
    <property type="term" value="C:phycobilisome"/>
    <property type="evidence" value="ECO:0007669"/>
    <property type="project" value="UniProtKB-KW"/>
</dbReference>
<dbReference type="GO" id="GO:0015979">
    <property type="term" value="P:photosynthesis"/>
    <property type="evidence" value="ECO:0007669"/>
    <property type="project" value="UniProtKB-KW"/>
</dbReference>
<dbReference type="CDD" id="cd14768">
    <property type="entry name" value="PC_PEC_beta"/>
    <property type="match status" value="1"/>
</dbReference>
<dbReference type="Gene3D" id="1.10.490.20">
    <property type="entry name" value="Phycocyanins"/>
    <property type="match status" value="1"/>
</dbReference>
<dbReference type="InterPro" id="IPR009050">
    <property type="entry name" value="Globin-like_sf"/>
</dbReference>
<dbReference type="InterPro" id="IPR012128">
    <property type="entry name" value="Phycobilisome_asu/bsu"/>
</dbReference>
<dbReference type="InterPro" id="IPR038719">
    <property type="entry name" value="Phycobilisome_asu/bsu_sf"/>
</dbReference>
<dbReference type="InterPro" id="IPR006247">
    <property type="entry name" value="Phycocyanin_b"/>
</dbReference>
<dbReference type="NCBIfam" id="TIGR01339">
    <property type="entry name" value="phycocy_beta"/>
    <property type="match status" value="1"/>
</dbReference>
<dbReference type="PANTHER" id="PTHR34011:SF7">
    <property type="entry name" value="C-PHYCOCYANIN BETA SUBUNIT"/>
    <property type="match status" value="1"/>
</dbReference>
<dbReference type="PANTHER" id="PTHR34011">
    <property type="entry name" value="PHYCOBILISOME 32.1 KDA LINKER POLYPEPTIDE, PHYCOCYANIN-ASSOCIATED, ROD 2-RELATED"/>
    <property type="match status" value="1"/>
</dbReference>
<dbReference type="Pfam" id="PF00502">
    <property type="entry name" value="Phycobilisome"/>
    <property type="match status" value="1"/>
</dbReference>
<dbReference type="PIRSF" id="PIRSF000081">
    <property type="entry name" value="Phycocyanin"/>
    <property type="match status" value="1"/>
</dbReference>
<dbReference type="SUPFAM" id="SSF46458">
    <property type="entry name" value="Globin-like"/>
    <property type="match status" value="1"/>
</dbReference>
<comment type="function">
    <text>Light-harvesting photosynthetic bile pigment-protein from the phycobiliprotein complex (phycobilisome, PBS). Phycocyanin is the major phycobiliprotein in the PBS rod.</text>
</comment>
<comment type="subunit">
    <text evidence="2">Heterodimer of an alpha and a beta subunit, which further assembles into trimers and the trimers into hexamers. The basic functional unit of phycobiliproteins is a ring-shaped hexamer formed from two back-to-back trimers contacting via the alpha chain subunits. The trimers are composed of alpha/beta subunit heterodimers arranged around a three-fold axis of symmetry. The phycoerythrins also contain a gamma subunit which is located in the center of the hexamer.</text>
</comment>
<comment type="subcellular location">
    <subcellularLocation>
        <location evidence="1">Plastid</location>
        <location evidence="1">Chloroplast thylakoid membrane</location>
        <topology evidence="1">Peripheral membrane protein</topology>
        <orientation evidence="1">Stromal side</orientation>
    </subcellularLocation>
    <text evidence="1">Part of the phycobilisome rod.</text>
</comment>
<comment type="PTM">
    <text evidence="2">Contains two covalently linked bilin chromophores.</text>
</comment>
<comment type="similarity">
    <text evidence="3">Belongs to the phycobiliprotein family.</text>
</comment>
<geneLocation type="chloroplast"/>
<name>PHCB_AGLNE</name>
<protein>
    <recommendedName>
        <fullName>C-phycocyanin beta chain</fullName>
    </recommendedName>
</protein>
<proteinExistence type="inferred from homology"/>
<accession>P28558</accession>
<evidence type="ECO:0000250" key="1"/>
<evidence type="ECO:0000250" key="2">
    <source>
        <dbReference type="UniProtKB" id="P00311"/>
    </source>
</evidence>
<evidence type="ECO:0000305" key="3"/>
<keyword id="KW-0042">Antenna complex</keyword>
<keyword id="KW-0089">Bile pigment</keyword>
<keyword id="KW-0150">Chloroplast</keyword>
<keyword id="KW-0157">Chromophore</keyword>
<keyword id="KW-0249">Electron transport</keyword>
<keyword id="KW-0472">Membrane</keyword>
<keyword id="KW-0488">Methylation</keyword>
<keyword id="KW-0602">Photosynthesis</keyword>
<keyword id="KW-0605">Phycobilisome</keyword>
<keyword id="KW-0934">Plastid</keyword>
<keyword id="KW-0793">Thylakoid</keyword>
<keyword id="KW-0813">Transport</keyword>
<feature type="chain" id="PRO_0000199141" description="C-phycocyanin beta chain">
    <location>
        <begin position="1"/>
        <end position="172"/>
    </location>
</feature>
<feature type="binding site" description="covalent" evidence="2">
    <location>
        <position position="82"/>
    </location>
    <ligand>
        <name>(2R,3E)-phycocyanobilin</name>
        <dbReference type="ChEBI" id="CHEBI:85275"/>
        <label>1</label>
    </ligand>
</feature>
<feature type="binding site" description="covalent" evidence="2">
    <location>
        <position position="153"/>
    </location>
    <ligand>
        <name>(2R,3E)-phycocyanobilin</name>
        <dbReference type="ChEBI" id="CHEBI:85275"/>
        <label>2</label>
    </ligand>
</feature>
<feature type="modified residue" description="N4-methylasparagine" evidence="2">
    <location>
        <position position="72"/>
    </location>
</feature>
<reference key="1">
    <citation type="journal article" date="1993" name="Plant Mol. Biol.">
        <title>Characterization and transcript analysis of the major phycobiliprotein subunit genes from Aglaothamnion neglectum (Rhodophyta).</title>
        <authorList>
            <person name="Apt K.E."/>
            <person name="Grossman A.R."/>
        </authorList>
    </citation>
    <scope>NUCLEOTIDE SEQUENCE [GENOMIC DNA]</scope>
</reference>
<sequence>MLDAFAKVVAQADARGEFLSSQQIDALSDIIAEGNKRLDTVNKINSNASAIVTNSARALFAEQPQLAQPGGNAYPSRRMAACLRDMEIVLRYVSYAIAAGDSSVLDDRCLNGLRETYQALGTPGSSVAVAIQKMKEASISLANDVNGVPLGDCSSLVAELSVYFDRAAASVV</sequence>
<organism>
    <name type="scientific">Aglaothamnion neglectum</name>
    <name type="common">Red alga</name>
    <dbReference type="NCBI Taxonomy" id="2765"/>
    <lineage>
        <taxon>Eukaryota</taxon>
        <taxon>Rhodophyta</taxon>
        <taxon>Florideophyceae</taxon>
        <taxon>Rhodymeniophycidae</taxon>
        <taxon>Ceramiales</taxon>
        <taxon>Callithamniaceae</taxon>
        <taxon>Aglaothamnion</taxon>
    </lineage>
</organism>
<gene>
    <name type="primary">cpcB</name>
</gene>